<reference key="1">
    <citation type="journal article" date="2000" name="Arch. Microbiol.">
        <title>Fermentation of 4-aminobutyrate by Clostridium aminobutyricum: cloning of two genes involved in the formation and dehydration of 4-hydroxybutyryl-CoA.</title>
        <authorList>
            <person name="Gerhardt A."/>
            <person name="Cinkaya I."/>
            <person name="Linder D."/>
            <person name="Huisman G."/>
            <person name="Buckel W."/>
        </authorList>
    </citation>
    <scope>NUCLEOTIDE SEQUENCE [GENOMIC DNA]</scope>
    <source>
        <strain>ATCC 13726 / DSM 2634</strain>
    </source>
</reference>
<reference key="2">
    <citation type="submission" date="2005-07" db="EMBL/GenBank/DDBJ databases">
        <authorList>
            <person name="Zhang J."/>
        </authorList>
    </citation>
    <scope>SEQUENCE REVISION TO 43; 167 AND 357</scope>
</reference>
<reference key="3">
    <citation type="journal article" date="1993" name="Eur. J. Biochem.">
        <title>Purification and properties of an iron-sulfur and FAD-containing 4-hydroxybutyryl-CoA dehydratase/vinylacetyl-CoA delta 3-delta 2-isomerase from Clostridium aminobutyricum.</title>
        <authorList>
            <person name="Scherf U."/>
            <person name="Buckel W."/>
        </authorList>
    </citation>
    <scope>PROTEIN SEQUENCE OF 1-30</scope>
    <scope>CATALYTIC ACTIVITY</scope>
    <scope>SUBUNIT</scope>
    <scope>COFACTOR</scope>
    <scope>BIOPHYSICOCHEMICAL PROPERTIES</scope>
    <scope>REACTION MECHANISM</scope>
    <source>
        <strain>ATCC 13726 / DSM 2634</strain>
    </source>
</reference>
<reference key="4">
    <citation type="journal article" date="2004" name="Proc. Natl. Acad. Sci. U.S.A.">
        <title>Crystal structure of 4-hydroxybutyryl-CoA dehydratase: radical catalysis involving a [4Fe-4S] cluster and flavin.</title>
        <authorList>
            <person name="Martins B.M."/>
            <person name="Dobbek H."/>
            <person name="Cinkaya I."/>
            <person name="Buckel W."/>
            <person name="Messerschmidt A."/>
        </authorList>
    </citation>
    <scope>X-RAY CRYSTALLOGRAPHY (1.6 ANGSTROMS) IN COMPLEX WITH IRON-SULFUR AND FAD</scope>
    <scope>COFACTOR</scope>
    <scope>REACTION MECHANISM</scope>
</reference>
<evidence type="ECO:0000269" key="1">
    <source>
    </source>
</evidence>
<evidence type="ECO:0000269" key="2">
    <source>
    </source>
</evidence>
<evidence type="ECO:0007829" key="3">
    <source>
        <dbReference type="PDB" id="1U8V"/>
    </source>
</evidence>
<accession>P55792</accession>
<accession>Q9RM87</accession>
<sequence length="490" mass="54422">MLMTAEQYIESLRKLNTRVYMFGEKIENWVDHPMIRPSINCVAMTYELAQDPQYADLMTTKSNLIGKTINRFANLHQSTDDLRKKVKMQRLLGQKTASCFQRCVGMDAFNAVFSTTYEIDQKYGTNYHKNFTEYLKYIQENDLIVDGAMTDPKGDRGLAPSAQKDPDLFLRIVEKREDGIVVRGAKAHQTGSINSHEHIIMPTIAMTEADKDYAVSFACPSDADGLFMIYGRQSCDTRKMEEGADIDLGNKQFGGQEALVVFDNVFIPNDRIFLCQEYDFAGMMVERFAGYHRQSYGGCKVGVGDVVIGAAALAADYNGAQKASHVKDKLIEMTHLNETLYCCGIACSAEGYPTAAGNYQIDLLLANVCKQNITRFPYEIVRLAEDIAGGLMVTMPSEADFKSETVVGRDGETIGDFCNKFFAAAPTCTTEERMRVLRFLENICLGASAVGYRTESMHGAGSPQAQRIMIARQGNINAKKELAKAIAGIK</sequence>
<proteinExistence type="evidence at protein level"/>
<protein>
    <recommendedName>
        <fullName>4-hydroxybutyryl-CoA dehydratase/vinylacetyl-CoA-Delta-isomerase</fullName>
        <shortName>4-BUDH</shortName>
        <ecNumber>4.2.1.120</ecNumber>
        <ecNumber>5.3.3.3</ecNumber>
    </recommendedName>
    <alternativeName>
        <fullName>Gamma-aminobutyrate metabolism dehydratase/isomerase</fullName>
    </alternativeName>
</protein>
<feature type="chain" id="PRO_0000083940" description="4-hydroxybutyryl-CoA dehydratase/vinylacetyl-CoA-Delta-isomerase">
    <location>
        <begin position="1"/>
        <end position="490"/>
    </location>
</feature>
<feature type="binding site" evidence="1">
    <location>
        <position position="99"/>
    </location>
    <ligand>
        <name>[4Fe-4S] cluster</name>
        <dbReference type="ChEBI" id="CHEBI:49883"/>
    </ligand>
</feature>
<feature type="binding site" evidence="1">
    <location>
        <position position="103"/>
    </location>
    <ligand>
        <name>[4Fe-4S] cluster</name>
        <dbReference type="ChEBI" id="CHEBI:49883"/>
    </ligand>
</feature>
<feature type="binding site" evidence="1">
    <location>
        <begin position="149"/>
        <end position="156"/>
    </location>
    <ligand>
        <name>FAD</name>
        <dbReference type="ChEBI" id="CHEBI:57692"/>
    </ligand>
</feature>
<feature type="binding site" evidence="1">
    <location>
        <begin position="188"/>
        <end position="190"/>
    </location>
    <ligand>
        <name>FAD</name>
        <dbReference type="ChEBI" id="CHEBI:57692"/>
    </ligand>
</feature>
<feature type="binding site" evidence="1">
    <location>
        <position position="292"/>
    </location>
    <ligand>
        <name>[4Fe-4S] cluster</name>
        <dbReference type="ChEBI" id="CHEBI:49883"/>
    </ligand>
</feature>
<feature type="binding site" evidence="1">
    <location>
        <position position="299"/>
    </location>
    <ligand>
        <name>[4Fe-4S] cluster</name>
        <dbReference type="ChEBI" id="CHEBI:49883"/>
    </ligand>
</feature>
<feature type="binding site" evidence="1">
    <location>
        <position position="325"/>
    </location>
    <ligand>
        <name>FAD</name>
        <dbReference type="ChEBI" id="CHEBI:57692"/>
    </ligand>
</feature>
<feature type="binding site" evidence="1">
    <location>
        <begin position="386"/>
        <end position="390"/>
    </location>
    <ligand>
        <name>FAD</name>
        <dbReference type="ChEBI" id="CHEBI:57692"/>
    </ligand>
</feature>
<feature type="helix" evidence="3">
    <location>
        <begin position="5"/>
        <end position="12"/>
    </location>
</feature>
<feature type="strand" evidence="3">
    <location>
        <begin position="19"/>
        <end position="21"/>
    </location>
</feature>
<feature type="helix" evidence="3">
    <location>
        <begin position="29"/>
        <end position="31"/>
    </location>
</feature>
<feature type="turn" evidence="3">
    <location>
        <begin position="33"/>
        <end position="35"/>
    </location>
</feature>
<feature type="helix" evidence="3">
    <location>
        <begin position="36"/>
        <end position="50"/>
    </location>
</feature>
<feature type="turn" evidence="3">
    <location>
        <begin position="52"/>
        <end position="54"/>
    </location>
</feature>
<feature type="helix" evidence="3">
    <location>
        <begin position="55"/>
        <end position="58"/>
    </location>
</feature>
<feature type="strand" evidence="3">
    <location>
        <begin position="59"/>
        <end position="61"/>
    </location>
</feature>
<feature type="turn" evidence="3">
    <location>
        <begin position="63"/>
        <end position="65"/>
    </location>
</feature>
<feature type="strand" evidence="3">
    <location>
        <begin position="66"/>
        <end position="70"/>
    </location>
</feature>
<feature type="helix" evidence="3">
    <location>
        <begin position="71"/>
        <end position="73"/>
    </location>
</feature>
<feature type="helix" evidence="3">
    <location>
        <begin position="79"/>
        <end position="96"/>
    </location>
</feature>
<feature type="helix" evidence="3">
    <location>
        <begin position="103"/>
        <end position="123"/>
    </location>
</feature>
<feature type="helix" evidence="3">
    <location>
        <begin position="127"/>
        <end position="141"/>
    </location>
</feature>
<feature type="strand" evidence="3">
    <location>
        <begin position="145"/>
        <end position="148"/>
    </location>
</feature>
<feature type="helix" evidence="3">
    <location>
        <begin position="160"/>
        <end position="162"/>
    </location>
</feature>
<feature type="strand" evidence="3">
    <location>
        <begin position="171"/>
        <end position="175"/>
    </location>
</feature>
<feature type="strand" evidence="3">
    <location>
        <begin position="177"/>
        <end position="186"/>
    </location>
</feature>
<feature type="strand" evidence="3">
    <location>
        <begin position="196"/>
        <end position="200"/>
    </location>
</feature>
<feature type="helix" evidence="3">
    <location>
        <begin position="208"/>
        <end position="213"/>
    </location>
</feature>
<feature type="strand" evidence="3">
    <location>
        <begin position="215"/>
        <end position="220"/>
    </location>
</feature>
<feature type="strand" evidence="3">
    <location>
        <begin position="226"/>
        <end position="230"/>
    </location>
</feature>
<feature type="helix" evidence="3">
    <location>
        <begin position="236"/>
        <end position="240"/>
    </location>
</feature>
<feature type="helix" evidence="3">
    <location>
        <begin position="246"/>
        <end position="248"/>
    </location>
</feature>
<feature type="strand" evidence="3">
    <location>
        <begin position="249"/>
        <end position="252"/>
    </location>
</feature>
<feature type="strand" evidence="3">
    <location>
        <begin position="258"/>
        <end position="268"/>
    </location>
</feature>
<feature type="helix" evidence="3">
    <location>
        <begin position="269"/>
        <end position="271"/>
    </location>
</feature>
<feature type="strand" evidence="3">
    <location>
        <begin position="272"/>
        <end position="276"/>
    </location>
</feature>
<feature type="helix" evidence="3">
    <location>
        <begin position="278"/>
        <end position="280"/>
    </location>
</feature>
<feature type="helix" evidence="3">
    <location>
        <begin position="281"/>
        <end position="318"/>
    </location>
</feature>
<feature type="helix" evidence="3">
    <location>
        <begin position="324"/>
        <end position="349"/>
    </location>
</feature>
<feature type="helix" evidence="3">
    <location>
        <begin position="363"/>
        <end position="373"/>
    </location>
</feature>
<feature type="helix" evidence="3">
    <location>
        <begin position="376"/>
        <end position="388"/>
    </location>
</feature>
<feature type="helix" evidence="3">
    <location>
        <begin position="391"/>
        <end position="394"/>
    </location>
</feature>
<feature type="helix" evidence="3">
    <location>
        <begin position="398"/>
        <end position="401"/>
    </location>
</feature>
<feature type="helix" evidence="3">
    <location>
        <begin position="414"/>
        <end position="421"/>
    </location>
</feature>
<feature type="helix" evidence="3">
    <location>
        <begin position="430"/>
        <end position="444"/>
    </location>
</feature>
<feature type="helix" evidence="3">
    <location>
        <begin position="449"/>
        <end position="452"/>
    </location>
</feature>
<feature type="helix" evidence="3">
    <location>
        <begin position="454"/>
        <end position="458"/>
    </location>
</feature>
<feature type="helix" evidence="3">
    <location>
        <begin position="463"/>
        <end position="473"/>
    </location>
</feature>
<feature type="helix" evidence="3">
    <location>
        <begin position="476"/>
        <end position="487"/>
    </location>
</feature>
<organism>
    <name type="scientific">Clostridium aminobutyricum</name>
    <dbReference type="NCBI Taxonomy" id="33953"/>
    <lineage>
        <taxon>Bacteria</taxon>
        <taxon>Bacillati</taxon>
        <taxon>Bacillota</taxon>
        <taxon>Clostridia</taxon>
        <taxon>Eubacteriales</taxon>
        <taxon>Clostridiaceae</taxon>
        <taxon>Clostridium</taxon>
    </lineage>
</organism>
<comment type="function">
    <text>Catalyzes the reversible conversion of 4-hydroxybutyryl-CoA to crotonyl-CoA. The mechanism of the reaction seems to go through three steps: (1) the FAD-dependent oxidation of 4-hydroxybutyryl-CoA to 4-hydroxycrotonyl-CoA; (2) the hydroxyl group is substituted by a hydride derived from the now reduced FAD in an SN2' reaction leading to vinylacetyl-CoA; (3) isomerization to yield crotonyl-CoA.</text>
</comment>
<comment type="catalytic activity">
    <reaction evidence="2">
        <text>4-hydroxybutanoyl-CoA = (2E)-butenoyl-CoA + H2O</text>
        <dbReference type="Rhea" id="RHEA:26530"/>
        <dbReference type="ChEBI" id="CHEBI:15377"/>
        <dbReference type="ChEBI" id="CHEBI:57332"/>
        <dbReference type="ChEBI" id="CHEBI:58574"/>
        <dbReference type="EC" id="4.2.1.120"/>
    </reaction>
</comment>
<comment type="catalytic activity">
    <reaction evidence="2">
        <text>vinylacetyl-CoA = (2E)-butenoyl-CoA</text>
        <dbReference type="Rhea" id="RHEA:10572"/>
        <dbReference type="ChEBI" id="CHEBI:57332"/>
        <dbReference type="ChEBI" id="CHEBI:57396"/>
        <dbReference type="EC" id="5.3.3.3"/>
    </reaction>
</comment>
<comment type="cofactor">
    <cofactor>
        <name>FAD</name>
        <dbReference type="ChEBI" id="CHEBI:57692"/>
    </cofactor>
    <text>Binds 1 FAD per subunit.</text>
</comment>
<comment type="cofactor">
    <cofactor>
        <name>[4Fe-4S] cluster</name>
        <dbReference type="ChEBI" id="CHEBI:49883"/>
    </cofactor>
    <text>Binds 1 [4Fe-4S] cluster per subunit.</text>
</comment>
<comment type="biophysicochemical properties">
    <kinetics>
        <KM evidence="2">50 uM for 4-hydroxybutanoyl-CoA</KM>
    </kinetics>
</comment>
<comment type="subunit">
    <text evidence="1 2">Homotetramer.</text>
</comment>
<keyword id="KW-0002">3D-structure</keyword>
<keyword id="KW-0004">4Fe-4S</keyword>
<keyword id="KW-0903">Direct protein sequencing</keyword>
<keyword id="KW-0274">FAD</keyword>
<keyword id="KW-0285">Flavoprotein</keyword>
<keyword id="KW-0408">Iron</keyword>
<keyword id="KW-0411">Iron-sulfur</keyword>
<keyword id="KW-0413">Isomerase</keyword>
<keyword id="KW-0456">Lyase</keyword>
<keyword id="KW-0479">Metal-binding</keyword>
<keyword id="KW-0511">Multifunctional enzyme</keyword>
<keyword id="KW-0560">Oxidoreductase</keyword>
<gene>
    <name type="primary">abfD</name>
</gene>
<dbReference type="EC" id="4.2.1.120"/>
<dbReference type="EC" id="5.3.3.3"/>
<dbReference type="EMBL" id="AJ250267">
    <property type="protein sequence ID" value="CAB60035.2"/>
    <property type="molecule type" value="Genomic_DNA"/>
</dbReference>
<dbReference type="PIR" id="S34765">
    <property type="entry name" value="S34765"/>
</dbReference>
<dbReference type="RefSeq" id="WP_155758543.1">
    <property type="nucleotide sequence ID" value="NZ_JAFJZZ010000001.1"/>
</dbReference>
<dbReference type="PDB" id="1U8V">
    <property type="method" value="X-ray"/>
    <property type="resolution" value="1.60 A"/>
    <property type="chains" value="A/B/C/D=1-490"/>
</dbReference>
<dbReference type="PDBsum" id="1U8V"/>
<dbReference type="SMR" id="P55792"/>
<dbReference type="DrugBank" id="DB03147">
    <property type="generic name" value="Flavin adenine dinucleotide"/>
</dbReference>
<dbReference type="KEGG" id="ag:CAB60035"/>
<dbReference type="BioCyc" id="MetaCyc:MONOMER-13485"/>
<dbReference type="BRENDA" id="4.2.1.120">
    <property type="organism ID" value="1455"/>
</dbReference>
<dbReference type="EvolutionaryTrace" id="P55792"/>
<dbReference type="GO" id="GO:0051539">
    <property type="term" value="F:4 iron, 4 sulfur cluster binding"/>
    <property type="evidence" value="ECO:0007669"/>
    <property type="project" value="UniProtKB-KW"/>
</dbReference>
<dbReference type="GO" id="GO:0043721">
    <property type="term" value="F:4-hydroxybutanoyl-CoA dehydratase activity"/>
    <property type="evidence" value="ECO:0007669"/>
    <property type="project" value="UniProtKB-EC"/>
</dbReference>
<dbReference type="GO" id="GO:0046872">
    <property type="term" value="F:metal ion binding"/>
    <property type="evidence" value="ECO:0007669"/>
    <property type="project" value="UniProtKB-KW"/>
</dbReference>
<dbReference type="GO" id="GO:0016627">
    <property type="term" value="F:oxidoreductase activity, acting on the CH-CH group of donors"/>
    <property type="evidence" value="ECO:0007669"/>
    <property type="project" value="InterPro"/>
</dbReference>
<dbReference type="GO" id="GO:0050393">
    <property type="term" value="F:vinylacetyl-CoA delta-isomerase activity"/>
    <property type="evidence" value="ECO:0007669"/>
    <property type="project" value="UniProtKB-EC"/>
</dbReference>
<dbReference type="Gene3D" id="1.10.3140.10">
    <property type="entry name" value="4-hydroxybutyryl-coa dehydratase, domain 1"/>
    <property type="match status" value="1"/>
</dbReference>
<dbReference type="Gene3D" id="2.40.110.10">
    <property type="entry name" value="Butyryl-CoA Dehydrogenase, subunit A, domain 2"/>
    <property type="match status" value="1"/>
</dbReference>
<dbReference type="Gene3D" id="1.20.140.10">
    <property type="entry name" value="Butyryl-CoA Dehydrogenase, subunit A, domain 3"/>
    <property type="match status" value="1"/>
</dbReference>
<dbReference type="InterPro" id="IPR046373">
    <property type="entry name" value="Acyl-CoA_Oxase/DH_mid-dom_sf"/>
</dbReference>
<dbReference type="InterPro" id="IPR036250">
    <property type="entry name" value="AcylCo_DH-like_C"/>
</dbReference>
<dbReference type="InterPro" id="IPR009100">
    <property type="entry name" value="AcylCoA_DH/oxidase_NM_dom_sf"/>
</dbReference>
<dbReference type="InterPro" id="IPR004925">
    <property type="entry name" value="HpaB/PvcC/4-BUDH"/>
</dbReference>
<dbReference type="InterPro" id="IPR024719">
    <property type="entry name" value="HpaB/PvcC/4-BUDH_C"/>
</dbReference>
<dbReference type="InterPro" id="IPR024674">
    <property type="entry name" value="HpaB/PvcC/4-BUDH_N"/>
</dbReference>
<dbReference type="PANTHER" id="PTHR36117">
    <property type="entry name" value="4-HYDROXYPHENYLACETATE 3-MONOOXYGENASE-RELATED"/>
    <property type="match status" value="1"/>
</dbReference>
<dbReference type="PANTHER" id="PTHR36117:SF3">
    <property type="entry name" value="4-HYDROXYPHENYLACETATE 3-MONOOXYGENASE-RELATED"/>
    <property type="match status" value="1"/>
</dbReference>
<dbReference type="Pfam" id="PF03241">
    <property type="entry name" value="HpaB"/>
    <property type="match status" value="1"/>
</dbReference>
<dbReference type="Pfam" id="PF11794">
    <property type="entry name" value="HpaB_N"/>
    <property type="match status" value="1"/>
</dbReference>
<dbReference type="PIRSF" id="PIRSF000331">
    <property type="entry name" value="HpaA_HpaB"/>
    <property type="match status" value="1"/>
</dbReference>
<dbReference type="SUPFAM" id="SSF47203">
    <property type="entry name" value="Acyl-CoA dehydrogenase C-terminal domain-like"/>
    <property type="match status" value="1"/>
</dbReference>
<dbReference type="SUPFAM" id="SSF56645">
    <property type="entry name" value="Acyl-CoA dehydrogenase NM domain-like"/>
    <property type="match status" value="1"/>
</dbReference>
<name>HDVD_CLOAM</name>